<comment type="function">
    <text evidence="1">Component of the eukaryotic translation initiation factor 3 (eIF-3) complex, which is involved in protein synthesis of a specialized repertoire of mRNAs and, together with other initiation factors, stimulates binding of mRNA and methionyl-tRNAi to the 40S ribosome. The eIF-3 complex specifically targets and initiates translation of a subset of mRNAs involved in cell proliferation.</text>
</comment>
<comment type="subunit">
    <text evidence="1">Component of the eukaryotic translation initiation factor 3 (eIF-3) complex.</text>
</comment>
<comment type="subcellular location">
    <subcellularLocation>
        <location evidence="1">Cytoplasm</location>
    </subcellularLocation>
</comment>
<comment type="similarity">
    <text evidence="1">Belongs to the eIF-3 subunit C family.</text>
</comment>
<sequence>MSSRFFYGGGSDSDSSSSDEEELYSDREEEEKSEEEESSEEEDETSEEEESDEETGARKFLKDVASDSEEEEEEEKVTVVKSAKDKRLDELENTIKLIENAKKINDWAVISTEFDKLNRQVAKITQSGPTPKIYIKAVADLEDFVNETVAKQKSGDKKLNASQAKGFNAAKQRIKKNNKDYGNLIDKYRKDKEDFMESDDEEAIPVIAAPRITKLERIEAPAAAIDDDGFATVGRGGKTLQYTPESILKHLRVIVESRGKKNTDRMEQIRTMEKLLEVAQTPYQRIRVYLTLISTRFDLTSTSSANYMAVDQWKSAEQDFSSLLSVLENNRDHVVFEGAEEWEDDEKQPTIAPGETLYIPGSIVSFAERLDDELTRSLQHIDPHTAEYIERLSDEKLLYTDLVRAQAYVEGLNEVEKTDPRQDSVNRVVMRRLEHVYFKPSQVITILEDATWKSLPSELDSSITPRASSGNVENLVLSLCNYLFKYSDGIIRARAMLCQIYFLALHDQYYRSRDLMLMSHLTENISNFDVSTQILFNRTLVQIGLCAFRSGLIYEAQNTLSEVCGSGRQKELLAQGIIMQRYSTVSPEQERLERQRQLPFHMHINLELLECIYLTSSMFLEVPLMAQTSSSPEMKRRVISKTFRRMLDYNERQVFTGPPENTRDGVIMSAKFLAAGDWKKAAEMLNSIKIWDLMPQPDKIKEMLSQQIQEEGLRTYLFTYAPFYDSLSIATLSNMFELSEKKISAIISRMISHEELAAALDQVNNAIVFRKGVELSRLQSQIVTLADKSMNLLEANEKTLEQRTQGMANAFQRDQGAGARGGRGSGRGGQARGGPRFPGGQQGRRPGGQQFGGGALGGAIKA</sequence>
<name>EIF3C_ASPFU</name>
<dbReference type="EMBL" id="AAHF01000016">
    <property type="protein sequence ID" value="EAL84535.1"/>
    <property type="molecule type" value="Genomic_DNA"/>
</dbReference>
<dbReference type="RefSeq" id="XP_746573.1">
    <property type="nucleotide sequence ID" value="XM_741480.1"/>
</dbReference>
<dbReference type="SMR" id="Q4W9S8"/>
<dbReference type="FunCoup" id="Q4W9S8">
    <property type="interactions" value="1163"/>
</dbReference>
<dbReference type="STRING" id="330879.Q4W9S8"/>
<dbReference type="EnsemblFungi" id="EAL84535">
    <property type="protein sequence ID" value="EAL84535"/>
    <property type="gene ID" value="AFUA_4G03860"/>
</dbReference>
<dbReference type="GeneID" id="3503927"/>
<dbReference type="KEGG" id="afm:AFUA_4G03860"/>
<dbReference type="VEuPathDB" id="FungiDB:Afu4g03860"/>
<dbReference type="eggNOG" id="KOG1076">
    <property type="taxonomic scope" value="Eukaryota"/>
</dbReference>
<dbReference type="HOGENOM" id="CLU_004304_0_2_1"/>
<dbReference type="InParanoid" id="Q4W9S8"/>
<dbReference type="OMA" id="FRCGLIK"/>
<dbReference type="OrthoDB" id="29647at2759"/>
<dbReference type="Proteomes" id="UP000002530">
    <property type="component" value="Chromosome 4"/>
</dbReference>
<dbReference type="GO" id="GO:0010494">
    <property type="term" value="C:cytoplasmic stress granule"/>
    <property type="evidence" value="ECO:0007669"/>
    <property type="project" value="EnsemblFungi"/>
</dbReference>
<dbReference type="GO" id="GO:0016282">
    <property type="term" value="C:eukaryotic 43S preinitiation complex"/>
    <property type="evidence" value="ECO:0007669"/>
    <property type="project" value="UniProtKB-UniRule"/>
</dbReference>
<dbReference type="GO" id="GO:0033290">
    <property type="term" value="C:eukaryotic 48S preinitiation complex"/>
    <property type="evidence" value="ECO:0007669"/>
    <property type="project" value="UniProtKB-UniRule"/>
</dbReference>
<dbReference type="GO" id="GO:0005852">
    <property type="term" value="C:eukaryotic translation initiation factor 3 complex"/>
    <property type="evidence" value="ECO:0000318"/>
    <property type="project" value="GO_Central"/>
</dbReference>
<dbReference type="GO" id="GO:0071540">
    <property type="term" value="C:eukaryotic translation initiation factor 3 complex, eIF3e"/>
    <property type="evidence" value="ECO:0007669"/>
    <property type="project" value="EnsemblFungi"/>
</dbReference>
<dbReference type="GO" id="GO:0071541">
    <property type="term" value="C:eukaryotic translation initiation factor 3 complex, eIF3m"/>
    <property type="evidence" value="ECO:0007669"/>
    <property type="project" value="EnsemblFungi"/>
</dbReference>
<dbReference type="GO" id="GO:0043614">
    <property type="term" value="C:multi-eIF complex"/>
    <property type="evidence" value="ECO:0007669"/>
    <property type="project" value="EnsemblFungi"/>
</dbReference>
<dbReference type="GO" id="GO:0003723">
    <property type="term" value="F:RNA binding"/>
    <property type="evidence" value="ECO:0007669"/>
    <property type="project" value="InterPro"/>
</dbReference>
<dbReference type="GO" id="GO:0003743">
    <property type="term" value="F:translation initiation factor activity"/>
    <property type="evidence" value="ECO:0007669"/>
    <property type="project" value="UniProtKB-UniRule"/>
</dbReference>
<dbReference type="GO" id="GO:0031369">
    <property type="term" value="F:translation initiation factor binding"/>
    <property type="evidence" value="ECO:0000318"/>
    <property type="project" value="GO_Central"/>
</dbReference>
<dbReference type="GO" id="GO:0001732">
    <property type="term" value="P:formation of cytoplasmic translation initiation complex"/>
    <property type="evidence" value="ECO:0007669"/>
    <property type="project" value="UniProtKB-UniRule"/>
</dbReference>
<dbReference type="GO" id="GO:0006413">
    <property type="term" value="P:translational initiation"/>
    <property type="evidence" value="ECO:0000318"/>
    <property type="project" value="GO_Central"/>
</dbReference>
<dbReference type="FunFam" id="1.10.10.10:FF:000300">
    <property type="entry name" value="Eukaryotic translation initiation factor 3 subunit C"/>
    <property type="match status" value="1"/>
</dbReference>
<dbReference type="Gene3D" id="1.10.10.10">
    <property type="entry name" value="Winged helix-like DNA-binding domain superfamily/Winged helix DNA-binding domain"/>
    <property type="match status" value="1"/>
</dbReference>
<dbReference type="HAMAP" id="MF_03002">
    <property type="entry name" value="eIF3c"/>
    <property type="match status" value="1"/>
</dbReference>
<dbReference type="InterPro" id="IPR027516">
    <property type="entry name" value="EIF3C"/>
</dbReference>
<dbReference type="InterPro" id="IPR008905">
    <property type="entry name" value="EIF3C_N_dom"/>
</dbReference>
<dbReference type="InterPro" id="IPR000717">
    <property type="entry name" value="PCI_dom"/>
</dbReference>
<dbReference type="InterPro" id="IPR036388">
    <property type="entry name" value="WH-like_DNA-bd_sf"/>
</dbReference>
<dbReference type="InterPro" id="IPR036390">
    <property type="entry name" value="WH_DNA-bd_sf"/>
</dbReference>
<dbReference type="PANTHER" id="PTHR13937">
    <property type="entry name" value="EUKARYOTIC TRANSLATION INITATION FACTOR 3, SUBUNIT 8 EIF3S8 -RELATED"/>
    <property type="match status" value="1"/>
</dbReference>
<dbReference type="PANTHER" id="PTHR13937:SF0">
    <property type="entry name" value="EUKARYOTIC TRANSLATION INITIATION FACTOR 3 SUBUNIT C-RELATED"/>
    <property type="match status" value="1"/>
</dbReference>
<dbReference type="Pfam" id="PF05470">
    <property type="entry name" value="eIF-3c_N"/>
    <property type="match status" value="2"/>
</dbReference>
<dbReference type="Pfam" id="PF01399">
    <property type="entry name" value="PCI"/>
    <property type="match status" value="1"/>
</dbReference>
<dbReference type="SMART" id="SM00088">
    <property type="entry name" value="PINT"/>
    <property type="match status" value="1"/>
</dbReference>
<dbReference type="SUPFAM" id="SSF46785">
    <property type="entry name" value="Winged helix' DNA-binding domain"/>
    <property type="match status" value="1"/>
</dbReference>
<dbReference type="PROSITE" id="PS50250">
    <property type="entry name" value="PCI"/>
    <property type="match status" value="1"/>
</dbReference>
<accession>Q4W9S8</accession>
<keyword id="KW-0963">Cytoplasm</keyword>
<keyword id="KW-0396">Initiation factor</keyword>
<keyword id="KW-0648">Protein biosynthesis</keyword>
<keyword id="KW-1185">Reference proteome</keyword>
<feature type="chain" id="PRO_0000364275" description="Eukaryotic translation initiation factor 3 subunit C">
    <location>
        <begin position="1"/>
        <end position="862"/>
    </location>
</feature>
<feature type="domain" description="PCI" evidence="2">
    <location>
        <begin position="600"/>
        <end position="774"/>
    </location>
</feature>
<feature type="region of interest" description="Disordered" evidence="3">
    <location>
        <begin position="1"/>
        <end position="81"/>
    </location>
</feature>
<feature type="region of interest" description="Disordered" evidence="3">
    <location>
        <begin position="813"/>
        <end position="862"/>
    </location>
</feature>
<feature type="compositionally biased region" description="Acidic residues" evidence="3">
    <location>
        <begin position="17"/>
        <end position="54"/>
    </location>
</feature>
<feature type="compositionally biased region" description="Basic and acidic residues" evidence="3">
    <location>
        <begin position="55"/>
        <end position="65"/>
    </location>
</feature>
<feature type="compositionally biased region" description="Acidic residues" evidence="3">
    <location>
        <begin position="66"/>
        <end position="75"/>
    </location>
</feature>
<feature type="compositionally biased region" description="Gly residues" evidence="3">
    <location>
        <begin position="818"/>
        <end position="862"/>
    </location>
</feature>
<protein>
    <recommendedName>
        <fullName evidence="1">Eukaryotic translation initiation factor 3 subunit C</fullName>
        <shortName evidence="1">eIF3c</shortName>
    </recommendedName>
    <alternativeName>
        <fullName evidence="1">Eukaryotic translation initiation factor 3 93 kDa subunit homolog</fullName>
        <shortName evidence="1">eIF3 p93</shortName>
    </alternativeName>
    <alternativeName>
        <fullName evidence="1">Translation initiation factor eIF3, p93 subunit homolog</fullName>
    </alternativeName>
</protein>
<evidence type="ECO:0000255" key="1">
    <source>
        <dbReference type="HAMAP-Rule" id="MF_03002"/>
    </source>
</evidence>
<evidence type="ECO:0000255" key="2">
    <source>
        <dbReference type="PROSITE-ProRule" id="PRU01185"/>
    </source>
</evidence>
<evidence type="ECO:0000256" key="3">
    <source>
        <dbReference type="SAM" id="MobiDB-lite"/>
    </source>
</evidence>
<proteinExistence type="inferred from homology"/>
<organism>
    <name type="scientific">Aspergillus fumigatus (strain ATCC MYA-4609 / CBS 101355 / FGSC A1100 / Af293)</name>
    <name type="common">Neosartorya fumigata</name>
    <dbReference type="NCBI Taxonomy" id="330879"/>
    <lineage>
        <taxon>Eukaryota</taxon>
        <taxon>Fungi</taxon>
        <taxon>Dikarya</taxon>
        <taxon>Ascomycota</taxon>
        <taxon>Pezizomycotina</taxon>
        <taxon>Eurotiomycetes</taxon>
        <taxon>Eurotiomycetidae</taxon>
        <taxon>Eurotiales</taxon>
        <taxon>Aspergillaceae</taxon>
        <taxon>Aspergillus</taxon>
        <taxon>Aspergillus subgen. Fumigati</taxon>
    </lineage>
</organism>
<gene>
    <name type="primary">nip1</name>
    <name type="ORF">AFUA_4G03860</name>
</gene>
<reference key="1">
    <citation type="journal article" date="2005" name="Nature">
        <title>Genomic sequence of the pathogenic and allergenic filamentous fungus Aspergillus fumigatus.</title>
        <authorList>
            <person name="Nierman W.C."/>
            <person name="Pain A."/>
            <person name="Anderson M.J."/>
            <person name="Wortman J.R."/>
            <person name="Kim H.S."/>
            <person name="Arroyo J."/>
            <person name="Berriman M."/>
            <person name="Abe K."/>
            <person name="Archer D.B."/>
            <person name="Bermejo C."/>
            <person name="Bennett J.W."/>
            <person name="Bowyer P."/>
            <person name="Chen D."/>
            <person name="Collins M."/>
            <person name="Coulsen R."/>
            <person name="Davies R."/>
            <person name="Dyer P.S."/>
            <person name="Farman M.L."/>
            <person name="Fedorova N."/>
            <person name="Fedorova N.D."/>
            <person name="Feldblyum T.V."/>
            <person name="Fischer R."/>
            <person name="Fosker N."/>
            <person name="Fraser A."/>
            <person name="Garcia J.L."/>
            <person name="Garcia M.J."/>
            <person name="Goble A."/>
            <person name="Goldman G.H."/>
            <person name="Gomi K."/>
            <person name="Griffith-Jones S."/>
            <person name="Gwilliam R."/>
            <person name="Haas B.J."/>
            <person name="Haas H."/>
            <person name="Harris D.E."/>
            <person name="Horiuchi H."/>
            <person name="Huang J."/>
            <person name="Humphray S."/>
            <person name="Jimenez J."/>
            <person name="Keller N."/>
            <person name="Khouri H."/>
            <person name="Kitamoto K."/>
            <person name="Kobayashi T."/>
            <person name="Konzack S."/>
            <person name="Kulkarni R."/>
            <person name="Kumagai T."/>
            <person name="Lafton A."/>
            <person name="Latge J.-P."/>
            <person name="Li W."/>
            <person name="Lord A."/>
            <person name="Lu C."/>
            <person name="Majoros W.H."/>
            <person name="May G.S."/>
            <person name="Miller B.L."/>
            <person name="Mohamoud Y."/>
            <person name="Molina M."/>
            <person name="Monod M."/>
            <person name="Mouyna I."/>
            <person name="Mulligan S."/>
            <person name="Murphy L.D."/>
            <person name="O'Neil S."/>
            <person name="Paulsen I."/>
            <person name="Penalva M.A."/>
            <person name="Pertea M."/>
            <person name="Price C."/>
            <person name="Pritchard B.L."/>
            <person name="Quail M.A."/>
            <person name="Rabbinowitsch E."/>
            <person name="Rawlins N."/>
            <person name="Rajandream M.A."/>
            <person name="Reichard U."/>
            <person name="Renauld H."/>
            <person name="Robson G.D."/>
            <person name="Rodriguez de Cordoba S."/>
            <person name="Rodriguez-Pena J.M."/>
            <person name="Ronning C.M."/>
            <person name="Rutter S."/>
            <person name="Salzberg S.L."/>
            <person name="Sanchez M."/>
            <person name="Sanchez-Ferrero J.C."/>
            <person name="Saunders D."/>
            <person name="Seeger K."/>
            <person name="Squares R."/>
            <person name="Squares S."/>
            <person name="Takeuchi M."/>
            <person name="Tekaia F."/>
            <person name="Turner G."/>
            <person name="Vazquez de Aldana C.R."/>
            <person name="Weidman J."/>
            <person name="White O."/>
            <person name="Woodward J.R."/>
            <person name="Yu J.-H."/>
            <person name="Fraser C.M."/>
            <person name="Galagan J.E."/>
            <person name="Asai K."/>
            <person name="Machida M."/>
            <person name="Hall N."/>
            <person name="Barrell B.G."/>
            <person name="Denning D.W."/>
        </authorList>
    </citation>
    <scope>NUCLEOTIDE SEQUENCE [LARGE SCALE GENOMIC DNA]</scope>
    <source>
        <strain>ATCC MYA-4609 / CBS 101355 / FGSC A1100 / Af293</strain>
    </source>
</reference>